<reference key="1">
    <citation type="submission" date="2015-04" db="EMBL/GenBank/DDBJ databases">
        <title>Characterization of 16-methoxy-2,3-dihydro-3-hydroxytabersonine synthase.</title>
        <authorList>
            <person name="Foureau E."/>
            <person name="Kellner F."/>
            <person name="Duge de Bernonville T."/>
            <person name="Brown S."/>
            <person name="Clastre M."/>
            <person name="Lanoue A."/>
            <person name="Papon N."/>
            <person name="O'Connor S."/>
            <person name="Courdavault V."/>
        </authorList>
    </citation>
    <scope>NUCLEOTIDE SEQUENCE [MRNA]</scope>
</reference>
<reference key="2">
    <citation type="journal article" date="2015" name="Proc. Natl. Acad. Sci. U.S.A.">
        <title>Completion of the seven-step pathway from tabersonine to the anticancer drug precursor vindoline and its assembly in yeast.</title>
        <authorList>
            <person name="Qu Y."/>
            <person name="Easson M.L."/>
            <person name="Froese J."/>
            <person name="Simionescu R."/>
            <person name="Hudlicky T."/>
            <person name="De Luca V."/>
        </authorList>
    </citation>
    <scope>NUCLEOTIDE SEQUENCE [MRNA] OF 2-356</scope>
    <scope>FUNCTION</scope>
    <scope>CATALYTIC ACTIVITY</scope>
    <scope>TISSUE SPECIFICITY</scope>
</reference>
<reference key="3">
    <citation type="journal article" date="2017" name="Sci. Rep.">
        <title>Folivory elicits a strong defense reaction in Catharanthus roseus: metabolomic and transcriptomic analyses reveal distinct local and systemic responses.</title>
        <authorList>
            <person name="Duge de Bernonville T."/>
            <person name="Carqueijeiro I."/>
            <person name="Lanoue A."/>
            <person name="Lafontaine F."/>
            <person name="Sanchez Bel P."/>
            <person name="Liesecke F."/>
            <person name="Musset K."/>
            <person name="Oudin A."/>
            <person name="Glevarec G."/>
            <person name="Pichon O."/>
            <person name="Besseau S."/>
            <person name="Clastre M."/>
            <person name="St-Pierre B."/>
            <person name="Flors V."/>
            <person name="Maury S."/>
            <person name="Huguet E."/>
            <person name="O'Connor S.E."/>
            <person name="Courdavault V."/>
        </authorList>
    </citation>
    <scope>INDUCTION BY HERBIVORY</scope>
</reference>
<keyword id="KW-0017">Alkaloid metabolism</keyword>
<keyword id="KW-0479">Metal-binding</keyword>
<keyword id="KW-0520">NAD</keyword>
<keyword id="KW-0547">Nucleotide-binding</keyword>
<keyword id="KW-0560">Oxidoreductase</keyword>
<keyword id="KW-0862">Zinc</keyword>
<feature type="chain" id="PRO_0000439950" description="16-methoxy-2,3-dihydro-3-hydroxytabersonine synthase">
    <location>
        <begin position="1"/>
        <end position="356"/>
    </location>
</feature>
<feature type="binding site" evidence="1">
    <location>
        <position position="49"/>
    </location>
    <ligand>
        <name>Zn(2+)</name>
        <dbReference type="ChEBI" id="CHEBI:29105"/>
        <label>1</label>
        <note>catalytic</note>
    </ligand>
</feature>
<feature type="binding site" evidence="1">
    <location>
        <position position="71"/>
    </location>
    <ligand>
        <name>Zn(2+)</name>
        <dbReference type="ChEBI" id="CHEBI:29105"/>
        <label>1</label>
        <note>catalytic</note>
    </ligand>
</feature>
<feature type="binding site" evidence="1">
    <location>
        <position position="102"/>
    </location>
    <ligand>
        <name>Zn(2+)</name>
        <dbReference type="ChEBI" id="CHEBI:29105"/>
        <label>2</label>
    </ligand>
</feature>
<feature type="binding site" evidence="1">
    <location>
        <position position="105"/>
    </location>
    <ligand>
        <name>Zn(2+)</name>
        <dbReference type="ChEBI" id="CHEBI:29105"/>
        <label>2</label>
    </ligand>
</feature>
<feature type="binding site" evidence="1">
    <location>
        <position position="108"/>
    </location>
    <ligand>
        <name>Zn(2+)</name>
        <dbReference type="ChEBI" id="CHEBI:29105"/>
        <label>2</label>
    </ligand>
</feature>
<feature type="binding site" evidence="1">
    <location>
        <position position="116"/>
    </location>
    <ligand>
        <name>Zn(2+)</name>
        <dbReference type="ChEBI" id="CHEBI:29105"/>
        <label>2</label>
    </ligand>
</feature>
<feature type="binding site" evidence="1">
    <location>
        <position position="162"/>
    </location>
    <ligand>
        <name>Zn(2+)</name>
        <dbReference type="ChEBI" id="CHEBI:29105"/>
        <label>1</label>
        <note>catalytic</note>
    </ligand>
</feature>
<feature type="binding site" evidence="1">
    <location>
        <begin position="187"/>
        <end position="192"/>
    </location>
    <ligand>
        <name>NAD(+)</name>
        <dbReference type="ChEBI" id="CHEBI:57540"/>
    </ligand>
</feature>
<feature type="sequence conflict" description="In Ref. 2; AKM12281." evidence="6" ref="2">
    <original>F</original>
    <variation>L</variation>
    <location>
        <position position="13"/>
    </location>
</feature>
<proteinExistence type="evidence at protein level"/>
<evidence type="ECO:0000250" key="1">
    <source>
        <dbReference type="UniProtKB" id="P06525"/>
    </source>
</evidence>
<evidence type="ECO:0000269" key="2">
    <source>
    </source>
</evidence>
<evidence type="ECO:0000269" key="3">
    <source>
    </source>
</evidence>
<evidence type="ECO:0000303" key="4">
    <source>
    </source>
</evidence>
<evidence type="ECO:0000303" key="5">
    <source ref="1"/>
</evidence>
<evidence type="ECO:0000305" key="6"/>
<evidence type="ECO:0000312" key="7">
    <source>
        <dbReference type="EMBL" id="AKV60044.1"/>
    </source>
</evidence>
<gene>
    <name evidence="4" type="primary">T3R</name>
</gene>
<name>T3R_CATRO</name>
<organism evidence="7">
    <name type="scientific">Catharanthus roseus</name>
    <name type="common">Madagascar periwinkle</name>
    <name type="synonym">Vinca rosea</name>
    <dbReference type="NCBI Taxonomy" id="4058"/>
    <lineage>
        <taxon>Eukaryota</taxon>
        <taxon>Viridiplantae</taxon>
        <taxon>Streptophyta</taxon>
        <taxon>Embryophyta</taxon>
        <taxon>Tracheophyta</taxon>
        <taxon>Spermatophyta</taxon>
        <taxon>Magnoliopsida</taxon>
        <taxon>eudicotyledons</taxon>
        <taxon>Gunneridae</taxon>
        <taxon>Pentapetalae</taxon>
        <taxon>asterids</taxon>
        <taxon>lamiids</taxon>
        <taxon>Gentianales</taxon>
        <taxon>Apocynaceae</taxon>
        <taxon>Rauvolfioideae</taxon>
        <taxon>Vinceae</taxon>
        <taxon>Catharanthinae</taxon>
        <taxon>Catharanthus</taxon>
    </lineage>
</organism>
<dbReference type="EC" id="1.1.99.41" evidence="2"/>
<dbReference type="EMBL" id="KR063270">
    <property type="protein sequence ID" value="AKV60044.1"/>
    <property type="molecule type" value="mRNA"/>
</dbReference>
<dbReference type="EMBL" id="KP122966">
    <property type="protein sequence ID" value="AKM12281.1"/>
    <property type="status" value="ALT_INIT"/>
    <property type="molecule type" value="mRNA"/>
</dbReference>
<dbReference type="SMR" id="A0A161CAI1"/>
<dbReference type="KEGG" id="ag:AKM12281"/>
<dbReference type="OrthoDB" id="1879366at2759"/>
<dbReference type="BRENDA" id="1.1.99.41">
    <property type="organism ID" value="1211"/>
</dbReference>
<dbReference type="UniPathway" id="UPA00365"/>
<dbReference type="GO" id="GO:0000166">
    <property type="term" value="F:nucleotide binding"/>
    <property type="evidence" value="ECO:0007669"/>
    <property type="project" value="UniProtKB-KW"/>
</dbReference>
<dbReference type="GO" id="GO:0016616">
    <property type="term" value="F:oxidoreductase activity, acting on the CH-OH group of donors, NAD or NADP as acceptor"/>
    <property type="evidence" value="ECO:0007669"/>
    <property type="project" value="InterPro"/>
</dbReference>
<dbReference type="GO" id="GO:0008270">
    <property type="term" value="F:zinc ion binding"/>
    <property type="evidence" value="ECO:0007669"/>
    <property type="project" value="InterPro"/>
</dbReference>
<dbReference type="GO" id="GO:0009820">
    <property type="term" value="P:alkaloid metabolic process"/>
    <property type="evidence" value="ECO:0007669"/>
    <property type="project" value="UniProtKB-KW"/>
</dbReference>
<dbReference type="CDD" id="cd05283">
    <property type="entry name" value="CAD1"/>
    <property type="match status" value="1"/>
</dbReference>
<dbReference type="FunFam" id="3.40.50.720:FF:000022">
    <property type="entry name" value="Cinnamyl alcohol dehydrogenase"/>
    <property type="match status" value="1"/>
</dbReference>
<dbReference type="FunFam" id="3.90.180.10:FF:000100">
    <property type="entry name" value="Putative cinnamyl alcohol dehydrogenase 6"/>
    <property type="match status" value="1"/>
</dbReference>
<dbReference type="Gene3D" id="3.90.180.10">
    <property type="entry name" value="Medium-chain alcohol dehydrogenases, catalytic domain"/>
    <property type="match status" value="1"/>
</dbReference>
<dbReference type="Gene3D" id="3.40.50.720">
    <property type="entry name" value="NAD(P)-binding Rossmann-like Domain"/>
    <property type="match status" value="1"/>
</dbReference>
<dbReference type="InterPro" id="IPR013149">
    <property type="entry name" value="ADH-like_C"/>
</dbReference>
<dbReference type="InterPro" id="IPR013154">
    <property type="entry name" value="ADH-like_N"/>
</dbReference>
<dbReference type="InterPro" id="IPR002328">
    <property type="entry name" value="ADH_Zn_CS"/>
</dbReference>
<dbReference type="InterPro" id="IPR047109">
    <property type="entry name" value="CAD-like"/>
</dbReference>
<dbReference type="InterPro" id="IPR011032">
    <property type="entry name" value="GroES-like_sf"/>
</dbReference>
<dbReference type="InterPro" id="IPR036291">
    <property type="entry name" value="NAD(P)-bd_dom_sf"/>
</dbReference>
<dbReference type="InterPro" id="IPR020843">
    <property type="entry name" value="PKS_ER"/>
</dbReference>
<dbReference type="PANTHER" id="PTHR42683">
    <property type="entry name" value="ALDEHYDE REDUCTASE"/>
    <property type="match status" value="1"/>
</dbReference>
<dbReference type="Pfam" id="PF08240">
    <property type="entry name" value="ADH_N"/>
    <property type="match status" value="1"/>
</dbReference>
<dbReference type="Pfam" id="PF00107">
    <property type="entry name" value="ADH_zinc_N"/>
    <property type="match status" value="1"/>
</dbReference>
<dbReference type="SMART" id="SM00829">
    <property type="entry name" value="PKS_ER"/>
    <property type="match status" value="1"/>
</dbReference>
<dbReference type="SUPFAM" id="SSF50129">
    <property type="entry name" value="GroES-like"/>
    <property type="match status" value="1"/>
</dbReference>
<dbReference type="SUPFAM" id="SSF51735">
    <property type="entry name" value="NAD(P)-binding Rossmann-fold domains"/>
    <property type="match status" value="1"/>
</dbReference>
<dbReference type="PROSITE" id="PS00059">
    <property type="entry name" value="ADH_ZINC"/>
    <property type="match status" value="1"/>
</dbReference>
<accession>A0A161CAI1</accession>
<accession>A0A0H3WJF8</accession>
<protein>
    <recommendedName>
        <fullName evidence="5">16-methoxy-2,3-dihydro-3-hydroxytabersonine synthase</fullName>
        <ecNumber evidence="2">1.1.99.41</ecNumber>
    </recommendedName>
    <alternativeName>
        <fullName evidence="6">3-hydroxy-1,2-didehydro-2,3-dihydrotabersonine reductase</fullName>
    </alternativeName>
    <alternativeName>
        <fullName evidence="4">Alcohol dehydrogenase-like protein 1</fullName>
        <shortName evidence="4">ADHL1</shortName>
    </alternativeName>
    <alternativeName>
        <fullName evidence="4">Tabersonine 3-reductase</fullName>
    </alternativeName>
</protein>
<sequence>MSSEMAAKSVKAFGLALKDSSGLFSPFNFSRRATGEHDVQLKVLYCGVCNFDNLMRRNKYGRTKFPYVFGHEIVGVVTEVGSNVKKFKIGNKVGVSFIVDTCRECERCKIGQQIACKKAVSSDGFFETPGYGGCSNIFVADENYVILWPENLPMDSGAPLLCIGITCYNPLRRFGLDKPGVRVGIVGLGAVGHLAIKFAKAFGARVTLISSSPGKKDEAFQKFGVDSFLVSSNAEEMQAAAETLDGILDTVPVVHPLEPLFALLKPLGKLIIIGEPHKPFEVSAMSLMEGGKIISASTGGSIKDTQEIVDFAAEHNVVADVEVIPVDYVNTAMERLDKADVKYRFVIDIGNTFKSP</sequence>
<comment type="function">
    <text evidence="2">Converts the unstable imine alcohols produced by CYP71D1V2/T3O into 3-hydroxy-16-methoxy-2,3-dihydrotabersonine or 3-hydroxy-2,3-dihydrotabersonine.</text>
</comment>
<comment type="catalytic activity">
    <reaction evidence="2">
        <text>(3R)-3-hydroxy-16-methoxy-2,3-dihydrotabersonine + A = (3R)-1,2-didehydro-3-hydroxy-16-methoxy-2,3-dihydrotabersonine + AH2</text>
        <dbReference type="Rhea" id="RHEA:52484"/>
        <dbReference type="ChEBI" id="CHEBI:13193"/>
        <dbReference type="ChEBI" id="CHEBI:17499"/>
        <dbReference type="ChEBI" id="CHEBI:58485"/>
        <dbReference type="ChEBI" id="CHEBI:136640"/>
        <dbReference type="EC" id="1.1.99.41"/>
    </reaction>
</comment>
<comment type="catalytic activity">
    <reaction evidence="2">
        <text>(3R)-3-hydroxy-2,3-dihydrotabersonine + A = (3R)-1,2-didehydro-3-hydroxy-2,3-dihydrotabersonine + AH2</text>
        <dbReference type="Rhea" id="RHEA:55388"/>
        <dbReference type="ChEBI" id="CHEBI:13193"/>
        <dbReference type="ChEBI" id="CHEBI:17499"/>
        <dbReference type="ChEBI" id="CHEBI:138461"/>
        <dbReference type="ChEBI" id="CHEBI:138462"/>
        <dbReference type="EC" id="1.1.99.41"/>
    </reaction>
</comment>
<comment type="cofactor">
    <cofactor evidence="1">
        <name>Zn(2+)</name>
        <dbReference type="ChEBI" id="CHEBI:29105"/>
    </cofactor>
    <text evidence="1">Binds 2 Zn(2+) ions per subunit.</text>
</comment>
<comment type="pathway">
    <text>Alkaloid biosynthesis; vindoline biosynthesis.</text>
</comment>
<comment type="tissue specificity">
    <text evidence="2">Expressed in leaf epidermis.</text>
</comment>
<comment type="induction">
    <text evidence="3">Up-regulated by herbivory.</text>
</comment>
<comment type="similarity">
    <text evidence="6">Belongs to the zinc-containing alcohol dehydrogenase family.</text>
</comment>
<comment type="sequence caution" evidence="6">
    <conflict type="erroneous initiation">
        <sequence resource="EMBL-CDS" id="AKM12281"/>
    </conflict>
    <text>Truncated N-terminus.</text>
</comment>